<proteinExistence type="evidence at protein level"/>
<protein>
    <recommendedName>
        <fullName>Uncharacterized protein ZSWIM9</fullName>
    </recommendedName>
</protein>
<organism>
    <name type="scientific">Homo sapiens</name>
    <name type="common">Human</name>
    <dbReference type="NCBI Taxonomy" id="9606"/>
    <lineage>
        <taxon>Eukaryota</taxon>
        <taxon>Metazoa</taxon>
        <taxon>Chordata</taxon>
        <taxon>Craniata</taxon>
        <taxon>Vertebrata</taxon>
        <taxon>Euteleostomi</taxon>
        <taxon>Mammalia</taxon>
        <taxon>Eutheria</taxon>
        <taxon>Euarchontoglires</taxon>
        <taxon>Primates</taxon>
        <taxon>Haplorrhini</taxon>
        <taxon>Catarrhini</taxon>
        <taxon>Hominidae</taxon>
        <taxon>Homo</taxon>
    </lineage>
</organism>
<accession>Q86XI8</accession>
<accession>A0A087WWL5</accession>
<comment type="interaction">
    <interactant intactId="EBI-2682158">
        <id>Q86XI8</id>
    </interactant>
    <interactant intactId="EBI-748062">
        <id>P17275</id>
        <label>JUNB</label>
    </interactant>
    <organismsDiffer>false</organismsDiffer>
    <experiments>2</experiments>
</comment>
<comment type="alternative products">
    <event type="alternative splicing"/>
    <isoform>
        <id>Q86XI8-1</id>
        <name>1</name>
        <sequence type="displayed"/>
    </isoform>
    <isoform>
        <id>Q86XI8-2</id>
        <name>2</name>
        <sequence type="described" ref="VSP_059340"/>
    </isoform>
</comment>
<comment type="sequence caution" evidence="2">
    <conflict type="erroneous initiation">
        <sequence resource="EMBL-CDS" id="AAH43386"/>
    </conflict>
    <text>Truncated N-terminus.</text>
</comment>
<feature type="chain" id="PRO_0000322596" description="Uncharacterized protein ZSWIM9">
    <location>
        <begin position="1"/>
        <end position="627"/>
    </location>
</feature>
<feature type="region of interest" description="Disordered" evidence="1">
    <location>
        <begin position="441"/>
        <end position="466"/>
    </location>
</feature>
<feature type="region of interest" description="Disordered" evidence="1">
    <location>
        <begin position="608"/>
        <end position="627"/>
    </location>
</feature>
<feature type="compositionally biased region" description="Basic and acidic residues" evidence="1">
    <location>
        <begin position="615"/>
        <end position="627"/>
    </location>
</feature>
<feature type="splice variant" id="VSP_059340" description="In isoform 2.">
    <original>GKGESTEDR</original>
    <variation>VRSLEGSPWRGAQLHDERAGGLRTAEWKGPQSEVEKGRGLEVRNLRGIPLEKSLELAPENGDQRGPQWEDERRRGPEIAEERGARVGVKRRRGLEDIVLVQLGDTRVTGMENGDGGGARSVGPKSRAGRGMEWGDAGGRCLGLGNGVVSGTPVGTVLEGSPEWAAARSEHLAAGDGLQEGGEDGPREPKRLCRPPGEEEVDWEPLAKFRAACGPELADLVAEELAFARQHGTRGFHWTGAGFALKDGTSDFFLDGALTRCSCSIHAARRLPCRHLFAARLLTGAALFHMDLLRDCWGRAPEP</variation>
    <location>
        <begin position="619"/>
        <end position="627"/>
    </location>
</feature>
<feature type="cross-link" description="Glycyl lysine isopeptide (Lys-Gly) (interchain with G-Cter in SUMO2)" evidence="4">
    <location sequence="Q86XI8-2">
        <position position="807"/>
    </location>
</feature>
<keyword id="KW-0025">Alternative splicing</keyword>
<keyword id="KW-1017">Isopeptide bond</keyword>
<keyword id="KW-1267">Proteomics identification</keyword>
<keyword id="KW-1185">Reference proteome</keyword>
<keyword id="KW-0832">Ubl conjugation</keyword>
<name>ZSWM9_HUMAN</name>
<dbReference type="EMBL" id="AC011466">
    <property type="status" value="NOT_ANNOTATED_CDS"/>
    <property type="molecule type" value="Genomic_DNA"/>
</dbReference>
<dbReference type="EMBL" id="BC043386">
    <property type="protein sequence ID" value="AAH43386.1"/>
    <property type="status" value="ALT_INIT"/>
    <property type="molecule type" value="mRNA"/>
</dbReference>
<dbReference type="CCDS" id="CCDS74411.1">
    <molecule id="Q86XI8-2"/>
</dbReference>
<dbReference type="RefSeq" id="NP_955373.3">
    <molecule id="Q86XI8-2"/>
    <property type="nucleotide sequence ID" value="NM_199341.4"/>
</dbReference>
<dbReference type="RefSeq" id="XP_006723268.1">
    <molecule id="Q86XI8-2"/>
    <property type="nucleotide sequence ID" value="XM_006723205.3"/>
</dbReference>
<dbReference type="RefSeq" id="XP_054176908.1">
    <molecule id="Q86XI8-2"/>
    <property type="nucleotide sequence ID" value="XM_054320933.1"/>
</dbReference>
<dbReference type="BioGRID" id="131938">
    <property type="interactions" value="22"/>
</dbReference>
<dbReference type="FunCoup" id="Q86XI8">
    <property type="interactions" value="119"/>
</dbReference>
<dbReference type="IntAct" id="Q86XI8">
    <property type="interactions" value="14"/>
</dbReference>
<dbReference type="MINT" id="Q86XI8"/>
<dbReference type="STRING" id="9606.ENSP00000480314"/>
<dbReference type="GlyGen" id="Q86XI8">
    <property type="glycosylation" value="1 site"/>
</dbReference>
<dbReference type="iPTMnet" id="Q86XI8"/>
<dbReference type="PhosphoSitePlus" id="Q86XI8"/>
<dbReference type="BioMuta" id="ZSWIM9"/>
<dbReference type="DMDM" id="189046910"/>
<dbReference type="jPOST" id="Q86XI8"/>
<dbReference type="MassIVE" id="Q86XI8"/>
<dbReference type="PaxDb" id="9606-ENSP00000480314"/>
<dbReference type="PeptideAtlas" id="Q86XI8"/>
<dbReference type="ProteomicsDB" id="70282"/>
<dbReference type="Antibodypedia" id="68326">
    <property type="antibodies" value="14 antibodies from 7 providers"/>
</dbReference>
<dbReference type="DNASU" id="374920"/>
<dbReference type="Ensembl" id="ENST00000328759.11">
    <molecule id="Q86XI8-1"/>
    <property type="protein sequence ID" value="ENSP00000331363.7"/>
    <property type="gene ID" value="ENSG00000185453.13"/>
</dbReference>
<dbReference type="Ensembl" id="ENST00000614654.2">
    <molecule id="Q86XI8-2"/>
    <property type="protein sequence ID" value="ENSP00000480314.1"/>
    <property type="gene ID" value="ENSG00000185453.13"/>
</dbReference>
<dbReference type="GeneID" id="374920"/>
<dbReference type="KEGG" id="hsa:374920"/>
<dbReference type="MANE-Select" id="ENST00000614654.2">
    <molecule id="Q86XI8-2"/>
    <property type="protein sequence ID" value="ENSP00000480314.1"/>
    <property type="RefSeq nucleotide sequence ID" value="NM_199341.4"/>
    <property type="RefSeq protein sequence ID" value="NP_955373.3"/>
</dbReference>
<dbReference type="UCSC" id="uc061aqx.1">
    <molecule id="Q86XI8-1"/>
    <property type="organism name" value="human"/>
</dbReference>
<dbReference type="AGR" id="HGNC:34495"/>
<dbReference type="CTD" id="374920"/>
<dbReference type="DisGeNET" id="374920"/>
<dbReference type="GeneCards" id="ZSWIM9"/>
<dbReference type="HGNC" id="HGNC:34495">
    <property type="gene designation" value="ZSWIM9"/>
</dbReference>
<dbReference type="HPA" id="ENSG00000185453">
    <property type="expression patterns" value="Tissue enhanced (brain)"/>
</dbReference>
<dbReference type="neXtProt" id="NX_Q86XI8"/>
<dbReference type="OpenTargets" id="ENSG00000185453"/>
<dbReference type="VEuPathDB" id="HostDB:ENSG00000185453"/>
<dbReference type="eggNOG" id="ENOG502QUUY">
    <property type="taxonomic scope" value="Eukaryota"/>
</dbReference>
<dbReference type="GeneTree" id="ENSGT00390000011694"/>
<dbReference type="HOGENOM" id="CLU_450996_0_0_1"/>
<dbReference type="InParanoid" id="Q86XI8"/>
<dbReference type="OMA" id="RIWPLLC"/>
<dbReference type="OrthoDB" id="9898241at2759"/>
<dbReference type="PAN-GO" id="Q86XI8">
    <property type="GO annotations" value="0 GO annotations based on evolutionary models"/>
</dbReference>
<dbReference type="PhylomeDB" id="Q86XI8"/>
<dbReference type="TreeFam" id="TF337793"/>
<dbReference type="PathwayCommons" id="Q86XI8"/>
<dbReference type="SignaLink" id="Q86XI8"/>
<dbReference type="BioGRID-ORCS" id="374920">
    <property type="hits" value="7 hits in 295 CRISPR screens"/>
</dbReference>
<dbReference type="ChiTaRS" id="C19orf68">
    <property type="organism name" value="human"/>
</dbReference>
<dbReference type="GenomeRNAi" id="374920"/>
<dbReference type="Pharos" id="Q86XI8">
    <property type="development level" value="Tdark"/>
</dbReference>
<dbReference type="PRO" id="PR:Q86XI8"/>
<dbReference type="Proteomes" id="UP000005640">
    <property type="component" value="Chromosome 19"/>
</dbReference>
<dbReference type="RNAct" id="Q86XI8">
    <property type="molecule type" value="protein"/>
</dbReference>
<dbReference type="Bgee" id="ENSG00000185453">
    <property type="expression patterns" value="Expressed in tendon of biceps brachii and 186 other cell types or tissues"/>
</dbReference>
<dbReference type="InterPro" id="IPR049218">
    <property type="entry name" value="DUF5575_C"/>
</dbReference>
<dbReference type="InterPro" id="IPR049217">
    <property type="entry name" value="DUF5575_N"/>
</dbReference>
<dbReference type="InterPro" id="IPR040854">
    <property type="entry name" value="ZSWIM9"/>
</dbReference>
<dbReference type="InterPro" id="IPR048315">
    <property type="entry name" value="ZSWIM9_RNaseH-like"/>
</dbReference>
<dbReference type="PANTHER" id="PTHR47086">
    <property type="entry name" value="BTB DOMAIN-CONTAINING PROTEIN"/>
    <property type="match status" value="1"/>
</dbReference>
<dbReference type="PANTHER" id="PTHR47086:SF1">
    <property type="entry name" value="ZINC FINGER SWIM-TYPE CONTAINING 9"/>
    <property type="match status" value="1"/>
</dbReference>
<dbReference type="Pfam" id="PF17738">
    <property type="entry name" value="DUF5575"/>
    <property type="match status" value="1"/>
</dbReference>
<dbReference type="Pfam" id="PF20784">
    <property type="entry name" value="DUF5575_C"/>
    <property type="match status" value="1"/>
</dbReference>
<dbReference type="Pfam" id="PF20783">
    <property type="entry name" value="DUF5575_N"/>
    <property type="match status" value="1"/>
</dbReference>
<sequence>MERPEPPPGTAAGQEEQELRERAFFSWAEFSRFFDAWCQQRLALFFVKSSMHLARCRWASAPPLYTLIDVLKYSYVRLVCKDVRAPSRPAVGPPQPGCPAFIIVKLSPLRDRLVVTECQLTHSHPACPLEFAYYFRPGHLLANACLPVRTTNKISKQFVAPADVRRLLSYCKGRDHGVLDALHVLEGLFRTDPEAKVKLVFVEDQAVVETVFFLTSRTRALLRRFPRMLLVDRLPGLQGALDLLAVLCVDGSGRARQAACCVARPGTPSLLRFALASLLQSAPDVKGRVRCLTAGPEVAAQLPAVRQLLPCARVQICRAQGLETLFSKAQELGGAGREDPGLWSRLCRLAGASSPAAYDEALAELHAHGPAAFVDYFERNWEPRRDMWVRFRAFEAARDLDACALVRGHRRRLLRRLSPSRGVAQCLRDLVAMQWADAAGEAVPEGPDGGGPWLEDEPGRGAQGENERVRGLETGDWGGAPKEGSIWRGAQMEKEWARALETRDWGGAQFEGEKGRALQIRDWRGGRLENQKPRGLEGGVLRGSKLEKGHLRGPEIRDWRGPQLEGEKDWGLEGYVWRGSQLEDQALRGLEGYTWRVAQLEDRRSTTDLRGTQFDYERGKGESTEDR</sequence>
<reference key="1">
    <citation type="journal article" date="2004" name="Nature">
        <title>The DNA sequence and biology of human chromosome 19.</title>
        <authorList>
            <person name="Grimwood J."/>
            <person name="Gordon L.A."/>
            <person name="Olsen A.S."/>
            <person name="Terry A."/>
            <person name="Schmutz J."/>
            <person name="Lamerdin J.E."/>
            <person name="Hellsten U."/>
            <person name="Goodstein D."/>
            <person name="Couronne O."/>
            <person name="Tran-Gyamfi M."/>
            <person name="Aerts A."/>
            <person name="Altherr M."/>
            <person name="Ashworth L."/>
            <person name="Bajorek E."/>
            <person name="Black S."/>
            <person name="Branscomb E."/>
            <person name="Caenepeel S."/>
            <person name="Carrano A.V."/>
            <person name="Caoile C."/>
            <person name="Chan Y.M."/>
            <person name="Christensen M."/>
            <person name="Cleland C.A."/>
            <person name="Copeland A."/>
            <person name="Dalin E."/>
            <person name="Dehal P."/>
            <person name="Denys M."/>
            <person name="Detter J.C."/>
            <person name="Escobar J."/>
            <person name="Flowers D."/>
            <person name="Fotopulos D."/>
            <person name="Garcia C."/>
            <person name="Georgescu A.M."/>
            <person name="Glavina T."/>
            <person name="Gomez M."/>
            <person name="Gonzales E."/>
            <person name="Groza M."/>
            <person name="Hammon N."/>
            <person name="Hawkins T."/>
            <person name="Haydu L."/>
            <person name="Ho I."/>
            <person name="Huang W."/>
            <person name="Israni S."/>
            <person name="Jett J."/>
            <person name="Kadner K."/>
            <person name="Kimball H."/>
            <person name="Kobayashi A."/>
            <person name="Larionov V."/>
            <person name="Leem S.-H."/>
            <person name="Lopez F."/>
            <person name="Lou Y."/>
            <person name="Lowry S."/>
            <person name="Malfatti S."/>
            <person name="Martinez D."/>
            <person name="McCready P.M."/>
            <person name="Medina C."/>
            <person name="Morgan J."/>
            <person name="Nelson K."/>
            <person name="Nolan M."/>
            <person name="Ovcharenko I."/>
            <person name="Pitluck S."/>
            <person name="Pollard M."/>
            <person name="Popkie A.P."/>
            <person name="Predki P."/>
            <person name="Quan G."/>
            <person name="Ramirez L."/>
            <person name="Rash S."/>
            <person name="Retterer J."/>
            <person name="Rodriguez A."/>
            <person name="Rogers S."/>
            <person name="Salamov A."/>
            <person name="Salazar A."/>
            <person name="She X."/>
            <person name="Smith D."/>
            <person name="Slezak T."/>
            <person name="Solovyev V."/>
            <person name="Thayer N."/>
            <person name="Tice H."/>
            <person name="Tsai M."/>
            <person name="Ustaszewska A."/>
            <person name="Vo N."/>
            <person name="Wagner M."/>
            <person name="Wheeler J."/>
            <person name="Wu K."/>
            <person name="Xie G."/>
            <person name="Yang J."/>
            <person name="Dubchak I."/>
            <person name="Furey T.S."/>
            <person name="DeJong P."/>
            <person name="Dickson M."/>
            <person name="Gordon D."/>
            <person name="Eichler E.E."/>
            <person name="Pennacchio L.A."/>
            <person name="Richardson P."/>
            <person name="Stubbs L."/>
            <person name="Rokhsar D.S."/>
            <person name="Myers R.M."/>
            <person name="Rubin E.M."/>
            <person name="Lucas S.M."/>
        </authorList>
    </citation>
    <scope>NUCLEOTIDE SEQUENCE [LARGE SCALE GENOMIC DNA]</scope>
</reference>
<reference key="2">
    <citation type="journal article" date="2004" name="Genome Res.">
        <title>The status, quality, and expansion of the NIH full-length cDNA project: the Mammalian Gene Collection (MGC).</title>
        <authorList>
            <consortium name="The MGC Project Team"/>
        </authorList>
    </citation>
    <scope>NUCLEOTIDE SEQUENCE [LARGE SCALE MRNA] (ISOFORM 1)</scope>
    <source>
        <tissue>Eye</tissue>
    </source>
</reference>
<reference key="3">
    <citation type="journal article" date="2017" name="Nat. Struct. Mol. Biol.">
        <title>Site-specific mapping of the human SUMO proteome reveals co-modification with phosphorylation.</title>
        <authorList>
            <person name="Hendriks I.A."/>
            <person name="Lyon D."/>
            <person name="Young C."/>
            <person name="Jensen L.J."/>
            <person name="Vertegaal A.C."/>
            <person name="Nielsen M.L."/>
        </authorList>
    </citation>
    <scope>SUMOYLATION [LARGE SCALE ANALYSIS] AT LYS-807 (ISOFORM 2)</scope>
    <scope>IDENTIFICATION BY MASS SPECTROMETRY [LARGE SCALE ANALYSIS]</scope>
</reference>
<gene>
    <name evidence="3" type="primary">ZSWIM9</name>
    <name type="synonym">C19orf68</name>
</gene>
<evidence type="ECO:0000256" key="1">
    <source>
        <dbReference type="SAM" id="MobiDB-lite"/>
    </source>
</evidence>
<evidence type="ECO:0000305" key="2"/>
<evidence type="ECO:0000312" key="3">
    <source>
        <dbReference type="HGNC" id="HGNC:34495"/>
    </source>
</evidence>
<evidence type="ECO:0007744" key="4">
    <source>
    </source>
</evidence>